<sequence>MTATAQQLEYLKNSIKSIQDYPKPGILFRDVTSLLEDPKAYALSIDLLVERYKNAGINKVVGTEARGFLFGAPVALGLGVGFVPVRKPGKLPRETISETYDLEYGTDQLEIHVDAIKPGDKVLVVDDLLATGGTIEATVKLIRRLGGEVADAAFIINLFDLGGEQRLEKQGITSYSLVPFPGH</sequence>
<reference key="1">
    <citation type="journal article" date="2001" name="Nature">
        <title>Genome sequence of enterohaemorrhagic Escherichia coli O157:H7.</title>
        <authorList>
            <person name="Perna N.T."/>
            <person name="Plunkett G. III"/>
            <person name="Burland V."/>
            <person name="Mau B."/>
            <person name="Glasner J.D."/>
            <person name="Rose D.J."/>
            <person name="Mayhew G.F."/>
            <person name="Evans P.S."/>
            <person name="Gregor J."/>
            <person name="Kirkpatrick H.A."/>
            <person name="Posfai G."/>
            <person name="Hackett J."/>
            <person name="Klink S."/>
            <person name="Boutin A."/>
            <person name="Shao Y."/>
            <person name="Miller L."/>
            <person name="Grotbeck E.J."/>
            <person name="Davis N.W."/>
            <person name="Lim A."/>
            <person name="Dimalanta E.T."/>
            <person name="Potamousis K."/>
            <person name="Apodaca J."/>
            <person name="Anantharaman T.S."/>
            <person name="Lin J."/>
            <person name="Yen G."/>
            <person name="Schwartz D.C."/>
            <person name="Welch R.A."/>
            <person name="Blattner F.R."/>
        </authorList>
    </citation>
    <scope>NUCLEOTIDE SEQUENCE [LARGE SCALE GENOMIC DNA]</scope>
    <source>
        <strain>O157:H7 / EDL933 / ATCC 700927 / EHEC</strain>
    </source>
</reference>
<reference key="2">
    <citation type="journal article" date="2001" name="DNA Res.">
        <title>Complete genome sequence of enterohemorrhagic Escherichia coli O157:H7 and genomic comparison with a laboratory strain K-12.</title>
        <authorList>
            <person name="Hayashi T."/>
            <person name="Makino K."/>
            <person name="Ohnishi M."/>
            <person name="Kurokawa K."/>
            <person name="Ishii K."/>
            <person name="Yokoyama K."/>
            <person name="Han C.-G."/>
            <person name="Ohtsubo E."/>
            <person name="Nakayama K."/>
            <person name="Murata T."/>
            <person name="Tanaka M."/>
            <person name="Tobe T."/>
            <person name="Iida T."/>
            <person name="Takami H."/>
            <person name="Honda T."/>
            <person name="Sasakawa C."/>
            <person name="Ogasawara N."/>
            <person name="Yasunaga T."/>
            <person name="Kuhara S."/>
            <person name="Shiba T."/>
            <person name="Hattori M."/>
            <person name="Shinagawa H."/>
        </authorList>
    </citation>
    <scope>NUCLEOTIDE SEQUENCE [LARGE SCALE GENOMIC DNA]</scope>
    <source>
        <strain>O157:H7 / Sakai / RIMD 0509952 / EHEC</strain>
    </source>
</reference>
<evidence type="ECO:0000255" key="1">
    <source>
        <dbReference type="HAMAP-Rule" id="MF_00004"/>
    </source>
</evidence>
<keyword id="KW-0963">Cytoplasm</keyword>
<keyword id="KW-0328">Glycosyltransferase</keyword>
<keyword id="KW-0660">Purine salvage</keyword>
<keyword id="KW-1185">Reference proteome</keyword>
<keyword id="KW-0808">Transferase</keyword>
<comment type="function">
    <text evidence="1">Catalyzes a salvage reaction resulting in the formation of AMP, that is energically less costly than de novo synthesis.</text>
</comment>
<comment type="catalytic activity">
    <reaction evidence="1">
        <text>AMP + diphosphate = 5-phospho-alpha-D-ribose 1-diphosphate + adenine</text>
        <dbReference type="Rhea" id="RHEA:16609"/>
        <dbReference type="ChEBI" id="CHEBI:16708"/>
        <dbReference type="ChEBI" id="CHEBI:33019"/>
        <dbReference type="ChEBI" id="CHEBI:58017"/>
        <dbReference type="ChEBI" id="CHEBI:456215"/>
        <dbReference type="EC" id="2.4.2.7"/>
    </reaction>
</comment>
<comment type="pathway">
    <text evidence="1">Purine metabolism; AMP biosynthesis via salvage pathway; AMP from adenine: step 1/1.</text>
</comment>
<comment type="subunit">
    <text evidence="1">Homodimer.</text>
</comment>
<comment type="subcellular location">
    <subcellularLocation>
        <location evidence="1">Cytoplasm</location>
    </subcellularLocation>
</comment>
<comment type="similarity">
    <text evidence="1">Belongs to the purine/pyrimidine phosphoribosyltransferase family.</text>
</comment>
<accession>Q8XD48</accession>
<proteinExistence type="inferred from homology"/>
<name>APT_ECO57</name>
<protein>
    <recommendedName>
        <fullName evidence="1">Adenine phosphoribosyltransferase</fullName>
        <shortName evidence="1">APRT</shortName>
        <ecNumber evidence="1">2.4.2.7</ecNumber>
    </recommendedName>
</protein>
<dbReference type="EC" id="2.4.2.7" evidence="1"/>
<dbReference type="EMBL" id="AE005174">
    <property type="protein sequence ID" value="AAG54818.1"/>
    <property type="molecule type" value="Genomic_DNA"/>
</dbReference>
<dbReference type="EMBL" id="BA000007">
    <property type="protein sequence ID" value="BAB33945.1"/>
    <property type="molecule type" value="Genomic_DNA"/>
</dbReference>
<dbReference type="PIR" id="B90694">
    <property type="entry name" value="B90694"/>
</dbReference>
<dbReference type="PIR" id="F85544">
    <property type="entry name" value="F85544"/>
</dbReference>
<dbReference type="RefSeq" id="NP_308549.1">
    <property type="nucleotide sequence ID" value="NC_002695.1"/>
</dbReference>
<dbReference type="RefSeq" id="WP_001301904.1">
    <property type="nucleotide sequence ID" value="NZ_VOAI01000005.1"/>
</dbReference>
<dbReference type="SMR" id="Q8XD48"/>
<dbReference type="STRING" id="155864.Z0586"/>
<dbReference type="GeneID" id="914626"/>
<dbReference type="KEGG" id="ece:Z0586"/>
<dbReference type="KEGG" id="ecs:ECs_0522"/>
<dbReference type="PATRIC" id="fig|386585.9.peg.628"/>
<dbReference type="eggNOG" id="COG0503">
    <property type="taxonomic scope" value="Bacteria"/>
</dbReference>
<dbReference type="HOGENOM" id="CLU_063339_3_0_6"/>
<dbReference type="OMA" id="QAYDLEY"/>
<dbReference type="UniPathway" id="UPA00588">
    <property type="reaction ID" value="UER00646"/>
</dbReference>
<dbReference type="Proteomes" id="UP000000558">
    <property type="component" value="Chromosome"/>
</dbReference>
<dbReference type="Proteomes" id="UP000002519">
    <property type="component" value="Chromosome"/>
</dbReference>
<dbReference type="GO" id="GO:0005737">
    <property type="term" value="C:cytoplasm"/>
    <property type="evidence" value="ECO:0007669"/>
    <property type="project" value="UniProtKB-SubCell"/>
</dbReference>
<dbReference type="GO" id="GO:0002055">
    <property type="term" value="F:adenine binding"/>
    <property type="evidence" value="ECO:0007669"/>
    <property type="project" value="TreeGrafter"/>
</dbReference>
<dbReference type="GO" id="GO:0003999">
    <property type="term" value="F:adenine phosphoribosyltransferase activity"/>
    <property type="evidence" value="ECO:0007669"/>
    <property type="project" value="UniProtKB-UniRule"/>
</dbReference>
<dbReference type="GO" id="GO:0016208">
    <property type="term" value="F:AMP binding"/>
    <property type="evidence" value="ECO:0007669"/>
    <property type="project" value="TreeGrafter"/>
</dbReference>
<dbReference type="GO" id="GO:0006168">
    <property type="term" value="P:adenine salvage"/>
    <property type="evidence" value="ECO:0007669"/>
    <property type="project" value="InterPro"/>
</dbReference>
<dbReference type="GO" id="GO:0044209">
    <property type="term" value="P:AMP salvage"/>
    <property type="evidence" value="ECO:0007669"/>
    <property type="project" value="UniProtKB-UniRule"/>
</dbReference>
<dbReference type="GO" id="GO:0006166">
    <property type="term" value="P:purine ribonucleoside salvage"/>
    <property type="evidence" value="ECO:0007669"/>
    <property type="project" value="UniProtKB-KW"/>
</dbReference>
<dbReference type="CDD" id="cd06223">
    <property type="entry name" value="PRTases_typeI"/>
    <property type="match status" value="1"/>
</dbReference>
<dbReference type="FunFam" id="3.40.50.2020:FF:000004">
    <property type="entry name" value="Adenine phosphoribosyltransferase"/>
    <property type="match status" value="1"/>
</dbReference>
<dbReference type="Gene3D" id="3.40.50.2020">
    <property type="match status" value="1"/>
</dbReference>
<dbReference type="HAMAP" id="MF_00004">
    <property type="entry name" value="Aden_phosphoribosyltr"/>
    <property type="match status" value="1"/>
</dbReference>
<dbReference type="InterPro" id="IPR005764">
    <property type="entry name" value="Ade_phspho_trans"/>
</dbReference>
<dbReference type="InterPro" id="IPR000836">
    <property type="entry name" value="PRibTrfase_dom"/>
</dbReference>
<dbReference type="InterPro" id="IPR029057">
    <property type="entry name" value="PRTase-like"/>
</dbReference>
<dbReference type="InterPro" id="IPR050054">
    <property type="entry name" value="UPRTase/APRTase"/>
</dbReference>
<dbReference type="NCBIfam" id="TIGR01090">
    <property type="entry name" value="apt"/>
    <property type="match status" value="1"/>
</dbReference>
<dbReference type="NCBIfam" id="NF002632">
    <property type="entry name" value="PRK02304.1-1"/>
    <property type="match status" value="1"/>
</dbReference>
<dbReference type="NCBIfam" id="NF002633">
    <property type="entry name" value="PRK02304.1-2"/>
    <property type="match status" value="1"/>
</dbReference>
<dbReference type="NCBIfam" id="NF002634">
    <property type="entry name" value="PRK02304.1-3"/>
    <property type="match status" value="1"/>
</dbReference>
<dbReference type="NCBIfam" id="NF002636">
    <property type="entry name" value="PRK02304.1-5"/>
    <property type="match status" value="1"/>
</dbReference>
<dbReference type="PANTHER" id="PTHR32315">
    <property type="entry name" value="ADENINE PHOSPHORIBOSYLTRANSFERASE"/>
    <property type="match status" value="1"/>
</dbReference>
<dbReference type="PANTHER" id="PTHR32315:SF3">
    <property type="entry name" value="ADENINE PHOSPHORIBOSYLTRANSFERASE"/>
    <property type="match status" value="1"/>
</dbReference>
<dbReference type="Pfam" id="PF00156">
    <property type="entry name" value="Pribosyltran"/>
    <property type="match status" value="1"/>
</dbReference>
<dbReference type="SUPFAM" id="SSF53271">
    <property type="entry name" value="PRTase-like"/>
    <property type="match status" value="1"/>
</dbReference>
<dbReference type="PROSITE" id="PS00103">
    <property type="entry name" value="PUR_PYR_PR_TRANSFER"/>
    <property type="match status" value="1"/>
</dbReference>
<gene>
    <name evidence="1" type="primary">apt</name>
    <name type="ordered locus">Z0586</name>
    <name type="ordered locus">ECs0522</name>
</gene>
<feature type="chain" id="PRO_0000149381" description="Adenine phosphoribosyltransferase">
    <location>
        <begin position="1"/>
        <end position="183"/>
    </location>
</feature>
<organism>
    <name type="scientific">Escherichia coli O157:H7</name>
    <dbReference type="NCBI Taxonomy" id="83334"/>
    <lineage>
        <taxon>Bacteria</taxon>
        <taxon>Pseudomonadati</taxon>
        <taxon>Pseudomonadota</taxon>
        <taxon>Gammaproteobacteria</taxon>
        <taxon>Enterobacterales</taxon>
        <taxon>Enterobacteriaceae</taxon>
        <taxon>Escherichia</taxon>
    </lineage>
</organism>